<sequence>MTTAFMTTDEVAQLRASDCMSCAGVDCTVADSGPVLEEFYQTTPRYNYQGGVTGKFWAKVHEVVDILNSSNEWPFEPLEVSRDRKTLWDGHHRSNAAILAGCDKPIPVEEW</sequence>
<keyword id="KW-1185">Reference proteome</keyword>
<reference key="1">
    <citation type="journal article" date="1993" name="Mol. Microbiol.">
        <title>DNA sequence, structure and gene expression of mycobacteriophage L5: a phage system for mycobacterial genetics.</title>
        <authorList>
            <person name="Hatfull G.F."/>
            <person name="Sarkis G.J."/>
        </authorList>
    </citation>
    <scope>NUCLEOTIDE SEQUENCE [LARGE SCALE GENOMIC DNA]</scope>
</reference>
<protein>
    <recommendedName>
        <fullName>Gene 81 protein</fullName>
    </recommendedName>
    <alternativeName>
        <fullName>Gp81</fullName>
    </alternativeName>
</protein>
<organismHost>
    <name type="scientific">Mycobacterium</name>
    <dbReference type="NCBI Taxonomy" id="1763"/>
</organismHost>
<dbReference type="EMBL" id="Z18946">
    <property type="protein sequence ID" value="CAA79457.1"/>
    <property type="molecule type" value="Genomic_DNA"/>
</dbReference>
<dbReference type="PIR" id="S31026">
    <property type="entry name" value="S31026"/>
</dbReference>
<dbReference type="RefSeq" id="NP_039745.1">
    <property type="nucleotide sequence ID" value="NC_001335.1"/>
</dbReference>
<dbReference type="SMR" id="Q05297"/>
<dbReference type="GeneID" id="2942905"/>
<dbReference type="KEGG" id="vg:2942905"/>
<dbReference type="OrthoDB" id="18910at10239"/>
<dbReference type="Proteomes" id="UP000002123">
    <property type="component" value="Genome"/>
</dbReference>
<feature type="chain" id="PRO_0000164824" description="Gene 81 protein">
    <location>
        <begin position="1"/>
        <end position="111"/>
    </location>
</feature>
<proteinExistence type="predicted"/>
<accession>Q05297</accession>
<gene>
    <name type="primary">81</name>
</gene>
<organism>
    <name type="scientific">Mycobacterium phage L5</name>
    <name type="common">Mycobacteriophage L5</name>
    <dbReference type="NCBI Taxonomy" id="31757"/>
    <lineage>
        <taxon>Viruses</taxon>
        <taxon>Duplodnaviria</taxon>
        <taxon>Heunggongvirae</taxon>
        <taxon>Uroviricota</taxon>
        <taxon>Caudoviricetes</taxon>
        <taxon>Fromanvirus</taxon>
    </lineage>
</organism>
<name>VG81_BPML5</name>